<keyword id="KW-0227">DNA damage</keyword>
<keyword id="KW-0234">DNA repair</keyword>
<keyword id="KW-0378">Hydrolase</keyword>
<keyword id="KW-1185">Reference proteome</keyword>
<comment type="similarity">
    <text evidence="1">Belongs to the DNA glycosylase MPG family.</text>
</comment>
<sequence>MEKDFFRKNGIDLAKSILGKYLIRKYENKVIVTKIIETEAYMGVNDKGAHVYGNKKTDRTKPLYLDGGHIYVYLIYGMYNCLNLSANIENVPECVLIRGVEPITSLDEISMNRYNKAYTELSKYQVKNITNGPGKLCKALKIDRSLNSKSIMGEELYISDFYYDDKGKKVFSKDELDIKTSKRINIDYAEEAKDFLWRFYIE</sequence>
<feature type="chain" id="PRO_0000265009" description="Putative 3-methyladenine DNA glycosylase">
    <location>
        <begin position="1"/>
        <end position="202"/>
    </location>
</feature>
<evidence type="ECO:0000255" key="1">
    <source>
        <dbReference type="HAMAP-Rule" id="MF_00527"/>
    </source>
</evidence>
<accession>Q18C13</accession>
<gene>
    <name type="ordered locus">CD630_14930</name>
</gene>
<name>3MGH_CLOD6</name>
<reference key="1">
    <citation type="journal article" date="2006" name="Nat. Genet.">
        <title>The multidrug-resistant human pathogen Clostridium difficile has a highly mobile, mosaic genome.</title>
        <authorList>
            <person name="Sebaihia M."/>
            <person name="Wren B.W."/>
            <person name="Mullany P."/>
            <person name="Fairweather N.F."/>
            <person name="Minton N."/>
            <person name="Stabler R."/>
            <person name="Thomson N.R."/>
            <person name="Roberts A.P."/>
            <person name="Cerdeno-Tarraga A.M."/>
            <person name="Wang H."/>
            <person name="Holden M.T.G."/>
            <person name="Wright A."/>
            <person name="Churcher C."/>
            <person name="Quail M.A."/>
            <person name="Baker S."/>
            <person name="Bason N."/>
            <person name="Brooks K."/>
            <person name="Chillingworth T."/>
            <person name="Cronin A."/>
            <person name="Davis P."/>
            <person name="Dowd L."/>
            <person name="Fraser A."/>
            <person name="Feltwell T."/>
            <person name="Hance Z."/>
            <person name="Holroyd S."/>
            <person name="Jagels K."/>
            <person name="Moule S."/>
            <person name="Mungall K."/>
            <person name="Price C."/>
            <person name="Rabbinowitsch E."/>
            <person name="Sharp S."/>
            <person name="Simmonds M."/>
            <person name="Stevens K."/>
            <person name="Unwin L."/>
            <person name="Whithead S."/>
            <person name="Dupuy B."/>
            <person name="Dougan G."/>
            <person name="Barrell B."/>
            <person name="Parkhill J."/>
        </authorList>
    </citation>
    <scope>NUCLEOTIDE SEQUENCE [LARGE SCALE GENOMIC DNA]</scope>
    <source>
        <strain>630</strain>
    </source>
</reference>
<organism>
    <name type="scientific">Clostridioides difficile (strain 630)</name>
    <name type="common">Peptoclostridium difficile</name>
    <dbReference type="NCBI Taxonomy" id="272563"/>
    <lineage>
        <taxon>Bacteria</taxon>
        <taxon>Bacillati</taxon>
        <taxon>Bacillota</taxon>
        <taxon>Clostridia</taxon>
        <taxon>Peptostreptococcales</taxon>
        <taxon>Peptostreptococcaceae</taxon>
        <taxon>Clostridioides</taxon>
    </lineage>
</organism>
<dbReference type="EC" id="3.2.2.-" evidence="1"/>
<dbReference type="EMBL" id="AM180355">
    <property type="protein sequence ID" value="CAJ68358.1"/>
    <property type="molecule type" value="Genomic_DNA"/>
</dbReference>
<dbReference type="RefSeq" id="WP_003427435.1">
    <property type="nucleotide sequence ID" value="NZ_JAUPES010000037.1"/>
</dbReference>
<dbReference type="RefSeq" id="YP_001087994.1">
    <property type="nucleotide sequence ID" value="NC_009089.1"/>
</dbReference>
<dbReference type="SMR" id="Q18C13"/>
<dbReference type="STRING" id="272563.CD630_14930"/>
<dbReference type="EnsemblBacteria" id="CAJ68358">
    <property type="protein sequence ID" value="CAJ68358"/>
    <property type="gene ID" value="CD630_14930"/>
</dbReference>
<dbReference type="KEGG" id="cdf:CD630_14930"/>
<dbReference type="KEGG" id="pdc:CDIF630_01658"/>
<dbReference type="PATRIC" id="fig|272563.120.peg.1562"/>
<dbReference type="eggNOG" id="COG2094">
    <property type="taxonomic scope" value="Bacteria"/>
</dbReference>
<dbReference type="OrthoDB" id="9794313at2"/>
<dbReference type="PhylomeDB" id="Q18C13"/>
<dbReference type="BioCyc" id="PDIF272563:G12WB-1630-MONOMER"/>
<dbReference type="Proteomes" id="UP000001978">
    <property type="component" value="Chromosome"/>
</dbReference>
<dbReference type="GO" id="GO:0003905">
    <property type="term" value="F:alkylbase DNA N-glycosylase activity"/>
    <property type="evidence" value="ECO:0007669"/>
    <property type="project" value="InterPro"/>
</dbReference>
<dbReference type="GO" id="GO:0003677">
    <property type="term" value="F:DNA binding"/>
    <property type="evidence" value="ECO:0007669"/>
    <property type="project" value="InterPro"/>
</dbReference>
<dbReference type="GO" id="GO:0006284">
    <property type="term" value="P:base-excision repair"/>
    <property type="evidence" value="ECO:0007669"/>
    <property type="project" value="InterPro"/>
</dbReference>
<dbReference type="CDD" id="cd00540">
    <property type="entry name" value="AAG"/>
    <property type="match status" value="1"/>
</dbReference>
<dbReference type="FunFam" id="3.10.300.10:FF:000001">
    <property type="entry name" value="Putative 3-methyladenine DNA glycosylase"/>
    <property type="match status" value="1"/>
</dbReference>
<dbReference type="Gene3D" id="3.10.300.10">
    <property type="entry name" value="Methylpurine-DNA glycosylase (MPG)"/>
    <property type="match status" value="1"/>
</dbReference>
<dbReference type="HAMAP" id="MF_00527">
    <property type="entry name" value="3MGH"/>
    <property type="match status" value="1"/>
</dbReference>
<dbReference type="InterPro" id="IPR011034">
    <property type="entry name" value="Formyl_transferase-like_C_sf"/>
</dbReference>
<dbReference type="InterPro" id="IPR003180">
    <property type="entry name" value="MPG"/>
</dbReference>
<dbReference type="InterPro" id="IPR036995">
    <property type="entry name" value="MPG_sf"/>
</dbReference>
<dbReference type="NCBIfam" id="TIGR00567">
    <property type="entry name" value="3mg"/>
    <property type="match status" value="1"/>
</dbReference>
<dbReference type="PANTHER" id="PTHR10429">
    <property type="entry name" value="DNA-3-METHYLADENINE GLYCOSYLASE"/>
    <property type="match status" value="1"/>
</dbReference>
<dbReference type="PANTHER" id="PTHR10429:SF0">
    <property type="entry name" value="DNA-3-METHYLADENINE GLYCOSYLASE"/>
    <property type="match status" value="1"/>
</dbReference>
<dbReference type="Pfam" id="PF02245">
    <property type="entry name" value="Pur_DNA_glyco"/>
    <property type="match status" value="1"/>
</dbReference>
<dbReference type="SUPFAM" id="SSF50486">
    <property type="entry name" value="FMT C-terminal domain-like"/>
    <property type="match status" value="1"/>
</dbReference>
<proteinExistence type="inferred from homology"/>
<protein>
    <recommendedName>
        <fullName evidence="1">Putative 3-methyladenine DNA glycosylase</fullName>
        <ecNumber evidence="1">3.2.2.-</ecNumber>
    </recommendedName>
</protein>